<name>PHL2_BACCE</name>
<reference key="1">
    <citation type="journal article" date="1988" name="Eur. J. Biochem.">
        <title>Nucleotide sequence and expression in Escherichia coli of the gene coding for sphingomyelinase of Bacillus cereus.</title>
        <authorList>
            <person name="Yamada A."/>
            <person name="Tsukagoshi N."/>
            <person name="Udaka S."/>
            <person name="Sasaki T."/>
            <person name="Makino S."/>
            <person name="Nakamura S."/>
            <person name="Little C."/>
            <person name="Tomita M."/>
            <person name="Ikezawa H."/>
        </authorList>
    </citation>
    <scope>NUCLEOTIDE SEQUENCE [GENOMIC DNA]</scope>
    <source>
        <strain>IAM 1208</strain>
    </source>
</reference>
<reference key="2">
    <citation type="journal article" date="1993" name="FEMS Microbiol. Lett.">
        <title>Sphingomyelinase is part of the 'enterotoxin complex' produced by Bacillus cereus.</title>
        <authorList>
            <person name="Granum P.E."/>
            <person name="Nissen H."/>
        </authorList>
    </citation>
    <scope>PROTEIN SEQUENCE OF 28-41</scope>
    <source>
        <strain>1230-88</strain>
    </source>
</reference>
<reference key="3">
    <citation type="journal article" date="1990" name="J. Biochem.">
        <title>Secondary structure of sphingomyelinase from Bacillus cereus.</title>
        <authorList>
            <person name="Tomita M."/>
            <person name="Nakai K."/>
            <person name="Yamada A."/>
            <person name="Taguchi R."/>
            <person name="Ikezawa H."/>
        </authorList>
    </citation>
    <scope>SECONDARY STRUCTURE</scope>
</reference>
<comment type="function">
    <text>Required, with sphingomyelinase, to effect target cell lysis (hemolysis).</text>
</comment>
<comment type="catalytic activity">
    <reaction>
        <text>a sphingomyelin + H2O = phosphocholine + an N-acylsphing-4-enine + H(+)</text>
        <dbReference type="Rhea" id="RHEA:19253"/>
        <dbReference type="ChEBI" id="CHEBI:15377"/>
        <dbReference type="ChEBI" id="CHEBI:15378"/>
        <dbReference type="ChEBI" id="CHEBI:17636"/>
        <dbReference type="ChEBI" id="CHEBI:52639"/>
        <dbReference type="ChEBI" id="CHEBI:295975"/>
        <dbReference type="EC" id="3.1.4.12"/>
    </reaction>
</comment>
<comment type="cofactor">
    <cofactor>
        <name>Mg(2+)</name>
        <dbReference type="ChEBI" id="CHEBI:18420"/>
    </cofactor>
</comment>
<comment type="activity regulation">
    <text>Activated by cobalt and manganese ions.</text>
</comment>
<comment type="subcellular location">
    <subcellularLocation>
        <location>Secreted</location>
    </subcellularLocation>
</comment>
<comment type="similarity">
    <text evidence="3">Belongs to the neutral sphingomyelinase family.</text>
</comment>
<keyword id="KW-0002">3D-structure</keyword>
<keyword id="KW-0204">Cytolysis</keyword>
<keyword id="KW-0903">Direct protein sequencing</keyword>
<keyword id="KW-1015">Disulfide bond</keyword>
<keyword id="KW-0354">Hemolysis</keyword>
<keyword id="KW-0378">Hydrolase</keyword>
<keyword id="KW-0964">Secreted</keyword>
<keyword id="KW-0732">Signal</keyword>
<dbReference type="EC" id="3.1.4.12"/>
<dbReference type="EMBL" id="X12711">
    <property type="protein sequence ID" value="CAA31214.1"/>
    <property type="molecule type" value="Genomic_DNA"/>
</dbReference>
<dbReference type="PIR" id="B32042">
    <property type="entry name" value="B32042"/>
</dbReference>
<dbReference type="PIR" id="S01130">
    <property type="entry name" value="S01130"/>
</dbReference>
<dbReference type="PDB" id="2DDR">
    <property type="method" value="X-ray"/>
    <property type="resolution" value="1.40 A"/>
    <property type="chains" value="A/B/C/D=28-333"/>
</dbReference>
<dbReference type="PDB" id="2DDS">
    <property type="method" value="X-ray"/>
    <property type="resolution" value="1.80 A"/>
    <property type="chains" value="A/B/C/D=28-333"/>
</dbReference>
<dbReference type="PDB" id="2DDT">
    <property type="method" value="X-ray"/>
    <property type="resolution" value="1.80 A"/>
    <property type="chains" value="A/B=28-333"/>
</dbReference>
<dbReference type="PDB" id="2UYR">
    <property type="method" value="X-ray"/>
    <property type="resolution" value="2.40 A"/>
    <property type="chains" value="X=28-333"/>
</dbReference>
<dbReference type="PDBsum" id="2DDR"/>
<dbReference type="PDBsum" id="2DDS"/>
<dbReference type="PDBsum" id="2DDT"/>
<dbReference type="PDBsum" id="2UYR"/>
<dbReference type="SMR" id="P11889"/>
<dbReference type="BindingDB" id="P11889"/>
<dbReference type="ChEMBL" id="CHEMBL5291588"/>
<dbReference type="BRENDA" id="3.1.4.12">
    <property type="organism ID" value="648"/>
</dbReference>
<dbReference type="SABIO-RK" id="P11889"/>
<dbReference type="EvolutionaryTrace" id="P11889"/>
<dbReference type="GO" id="GO:0005576">
    <property type="term" value="C:extracellular region"/>
    <property type="evidence" value="ECO:0007669"/>
    <property type="project" value="UniProtKB-SubCell"/>
</dbReference>
<dbReference type="GO" id="GO:0004767">
    <property type="term" value="F:sphingomyelin phosphodiesterase activity"/>
    <property type="evidence" value="ECO:0007669"/>
    <property type="project" value="UniProtKB-EC"/>
</dbReference>
<dbReference type="GO" id="GO:0031640">
    <property type="term" value="P:killing of cells of another organism"/>
    <property type="evidence" value="ECO:0007669"/>
    <property type="project" value="UniProtKB-KW"/>
</dbReference>
<dbReference type="CDD" id="cd09078">
    <property type="entry name" value="nSMase"/>
    <property type="match status" value="1"/>
</dbReference>
<dbReference type="FunFam" id="3.60.10.10:FF:000063">
    <property type="entry name" value="Sphingomyelinase C"/>
    <property type="match status" value="1"/>
</dbReference>
<dbReference type="Gene3D" id="3.60.10.10">
    <property type="entry name" value="Endonuclease/exonuclease/phosphatase"/>
    <property type="match status" value="1"/>
</dbReference>
<dbReference type="InterPro" id="IPR036691">
    <property type="entry name" value="Endo/exonu/phosph_ase_sf"/>
</dbReference>
<dbReference type="InterPro" id="IPR005135">
    <property type="entry name" value="Endo/exonuclease/phosphatase"/>
</dbReference>
<dbReference type="InterPro" id="IPR038772">
    <property type="entry name" value="Sph/SMPD2-like"/>
</dbReference>
<dbReference type="InterPro" id="IPR017766">
    <property type="entry name" value="Sphingomyelinase/PLipase_C"/>
</dbReference>
<dbReference type="NCBIfam" id="TIGR03395">
    <property type="entry name" value="sphingomy"/>
    <property type="match status" value="1"/>
</dbReference>
<dbReference type="PANTHER" id="PTHR16320:SF23">
    <property type="entry name" value="SPHINGOMYELINASE C 1"/>
    <property type="match status" value="1"/>
</dbReference>
<dbReference type="PANTHER" id="PTHR16320">
    <property type="entry name" value="SPHINGOMYELINASE FAMILY MEMBER"/>
    <property type="match status" value="1"/>
</dbReference>
<dbReference type="Pfam" id="PF03372">
    <property type="entry name" value="Exo_endo_phos"/>
    <property type="match status" value="1"/>
</dbReference>
<dbReference type="SUPFAM" id="SSF56219">
    <property type="entry name" value="DNase I-like"/>
    <property type="match status" value="1"/>
</dbReference>
<proteinExistence type="evidence at protein level"/>
<feature type="signal peptide" evidence="2">
    <location>
        <begin position="1"/>
        <end position="27"/>
    </location>
</feature>
<feature type="chain" id="PRO_0000019900" description="Sphingomyelinase C">
    <location>
        <begin position="28"/>
        <end position="333"/>
    </location>
</feature>
<feature type="disulfide bond" evidence="1">
    <location>
        <begin position="150"/>
        <end position="186"/>
    </location>
</feature>
<feature type="sequence conflict" description="In Ref. 2; AA sequence." evidence="3" ref="2">
    <original>Q</original>
    <variation>E</variation>
    <location>
        <position position="33"/>
    </location>
</feature>
<feature type="strand" evidence="4">
    <location>
        <begin position="36"/>
        <end position="46"/>
    </location>
</feature>
<feature type="turn" evidence="4">
    <location>
        <begin position="49"/>
        <end position="51"/>
    </location>
</feature>
<feature type="helix" evidence="4">
    <location>
        <begin position="57"/>
        <end position="66"/>
    </location>
</feature>
<feature type="strand" evidence="4">
    <location>
        <begin position="74"/>
        <end position="81"/>
    </location>
</feature>
<feature type="helix" evidence="4">
    <location>
        <begin position="84"/>
        <end position="94"/>
    </location>
</feature>
<feature type="turn" evidence="4">
    <location>
        <begin position="95"/>
        <end position="97"/>
    </location>
</feature>
<feature type="strand" evidence="4">
    <location>
        <begin position="113"/>
        <end position="119"/>
    </location>
</feature>
<feature type="strand" evidence="5">
    <location>
        <begin position="122"/>
        <end position="126"/>
    </location>
</feature>
<feature type="strand" evidence="4">
    <location>
        <begin position="131"/>
        <end position="136"/>
    </location>
</feature>
<feature type="strand" evidence="4">
    <location>
        <begin position="138"/>
        <end position="145"/>
    </location>
</feature>
<feature type="strand" evidence="4">
    <location>
        <begin position="151"/>
        <end position="153"/>
    </location>
</feature>
<feature type="strand" evidence="4">
    <location>
        <begin position="159"/>
        <end position="167"/>
    </location>
</feature>
<feature type="strand" evidence="4">
    <location>
        <begin position="170"/>
        <end position="178"/>
    </location>
</feature>
<feature type="helix" evidence="4">
    <location>
        <begin position="184"/>
        <end position="186"/>
    </location>
</feature>
<feature type="helix" evidence="4">
    <location>
        <begin position="191"/>
        <end position="209"/>
    </location>
</feature>
<feature type="strand" evidence="4">
    <location>
        <begin position="217"/>
        <end position="222"/>
    </location>
</feature>
<feature type="turn" evidence="4">
    <location>
        <begin position="228"/>
        <end position="230"/>
    </location>
</feature>
<feature type="helix" evidence="4">
    <location>
        <begin position="237"/>
        <end position="245"/>
    </location>
</feature>
<feature type="strand" evidence="4">
    <location>
        <begin position="251"/>
        <end position="254"/>
    </location>
</feature>
<feature type="turn" evidence="4">
    <location>
        <begin position="261"/>
        <end position="263"/>
    </location>
</feature>
<feature type="helix" evidence="4">
    <location>
        <begin position="265"/>
        <end position="270"/>
    </location>
</feature>
<feature type="strand" evidence="4">
    <location>
        <begin position="280"/>
        <end position="285"/>
    </location>
</feature>
<feature type="strand" evidence="4">
    <location>
        <begin position="292"/>
        <end position="298"/>
    </location>
</feature>
<feature type="strand" evidence="4">
    <location>
        <begin position="306"/>
        <end position="310"/>
    </location>
</feature>
<feature type="strand" evidence="4">
    <location>
        <begin position="313"/>
        <end position="317"/>
    </location>
</feature>
<feature type="strand" evidence="5">
    <location>
        <begin position="320"/>
        <end position="323"/>
    </location>
</feature>
<feature type="strand" evidence="4">
    <location>
        <begin position="326"/>
        <end position="331"/>
    </location>
</feature>
<accession>P11889</accession>
<evidence type="ECO:0000250" key="1"/>
<evidence type="ECO:0000269" key="2">
    <source>
    </source>
</evidence>
<evidence type="ECO:0000305" key="3"/>
<evidence type="ECO:0007829" key="4">
    <source>
        <dbReference type="PDB" id="2DDR"/>
    </source>
</evidence>
<evidence type="ECO:0007829" key="5">
    <source>
        <dbReference type="PDB" id="2UYR"/>
    </source>
</evidence>
<gene>
    <name type="primary">sph</name>
</gene>
<organism>
    <name type="scientific">Bacillus cereus</name>
    <dbReference type="NCBI Taxonomy" id="1396"/>
    <lineage>
        <taxon>Bacteria</taxon>
        <taxon>Bacillati</taxon>
        <taxon>Bacillota</taxon>
        <taxon>Bacilli</taxon>
        <taxon>Bacillales</taxon>
        <taxon>Bacillaceae</taxon>
        <taxon>Bacillus</taxon>
        <taxon>Bacillus cereus group</taxon>
    </lineage>
</organism>
<protein>
    <recommendedName>
        <fullName>Sphingomyelinase C</fullName>
        <shortName>SMase</shortName>
        <ecNumber>3.1.4.12</ecNumber>
    </recommendedName>
    <alternativeName>
        <fullName>Cereolysin B</fullName>
    </alternativeName>
    <alternativeName>
        <fullName>SMPLC</fullName>
    </alternativeName>
    <alternativeName>
        <fullName>Sphingomyelin phosphodiesterase</fullName>
    </alternativeName>
</protein>
<sequence>MKGKLLKGVLSLGVGLGALYSGTSAQAEASTNQNDTLKVMTHNVYMLSTNLYPNWGQTERADLIGAADYIKNQDVVILNEVFDNSASDRLLGNLKKEYPNQTAVLGRSSGSEWDKTLGNYSSSTPEDGGVAIVSKWPIAEKIQYVFAKGCGPDNLSNKGFVYTKIKKNDRFVHVIGTHLQAEDSMCGKTSPASVRTNQLKEIQDFIKNKNIPNNEYVLIGGDMNVNKINAENNNDSEYASMFKTLNASVPSYTGHTATWDATTNSIAKYNFPDSPAEYLDYIIASKDHANPSYIENKVLQPKSPQWTVTSWFQKYTYNDYSDDYPVEATISMK</sequence>